<dbReference type="EMBL" id="AJ243719">
    <property type="protein sequence ID" value="CAB85902.1"/>
    <property type="molecule type" value="Genomic_RNA"/>
</dbReference>
<dbReference type="RefSeq" id="NP_620437.1">
    <property type="nucleotide sequence ID" value="NC_003724.1"/>
</dbReference>
<dbReference type="GeneID" id="991172"/>
<dbReference type="KEGG" id="vg:991172"/>
<dbReference type="Proteomes" id="UP000006715">
    <property type="component" value="Genome"/>
</dbReference>
<dbReference type="GO" id="GO:0019029">
    <property type="term" value="C:helical viral capsid"/>
    <property type="evidence" value="ECO:0007669"/>
    <property type="project" value="UniProtKB-KW"/>
</dbReference>
<dbReference type="GO" id="GO:0005198">
    <property type="term" value="F:structural molecule activity"/>
    <property type="evidence" value="ECO:0007669"/>
    <property type="project" value="InterPro"/>
</dbReference>
<dbReference type="Gene3D" id="1.20.120.70">
    <property type="entry name" value="Tobacco mosaic virus-like, coat protein"/>
    <property type="match status" value="1"/>
</dbReference>
<dbReference type="InterPro" id="IPR001337">
    <property type="entry name" value="TMV-like_coat"/>
</dbReference>
<dbReference type="InterPro" id="IPR036417">
    <property type="entry name" value="TMV-like_coat_sf"/>
</dbReference>
<dbReference type="Pfam" id="PF00721">
    <property type="entry name" value="TMV_coat"/>
    <property type="match status" value="1"/>
</dbReference>
<proteinExistence type="inferred from homology"/>
<organism>
    <name type="scientific">Potato mop-top virus (isolate Potato/Sweden/Sw)</name>
    <name type="common">PMTV</name>
    <dbReference type="NCBI Taxonomy" id="652839"/>
    <lineage>
        <taxon>Viruses</taxon>
        <taxon>Riboviria</taxon>
        <taxon>Orthornavirae</taxon>
        <taxon>Kitrinoviricota</taxon>
        <taxon>Alsuviricetes</taxon>
        <taxon>Martellivirales</taxon>
        <taxon>Virgaviridae</taxon>
        <taxon>Pomovirus</taxon>
        <taxon>Potato mop-top virus</taxon>
    </lineage>
</organism>
<keyword id="KW-0167">Capsid protein</keyword>
<keyword id="KW-1139">Helical capsid protein</keyword>
<keyword id="KW-1185">Reference proteome</keyword>
<keyword id="KW-0946">Virion</keyword>
<organismHost>
    <name type="scientific">Solanum nigrum</name>
    <name type="common">Black nightshade</name>
    <dbReference type="NCBI Taxonomy" id="4112"/>
</organismHost>
<organismHost>
    <name type="scientific">Solanum tuberosum</name>
    <name type="common">Potato</name>
    <dbReference type="NCBI Taxonomy" id="4113"/>
</organismHost>
<sequence length="176" mass="19833">MAENRGERRAAVENRYDAWDHEQAMKAAVRKFISYDQFSAQLRNWREARLNIIEHATSVLSQVSNLGRTHFYSRTERFGGSSLVGDKLYVCLNETRMKTALNNIIVALQTVNGEGRARRLGPREASANTGGEDSALNVAHQLAEVDDLLTDESFLREAVFTQDKYELVNGLRWAGA</sequence>
<comment type="function">
    <text>Capsid protein self-assembles to form rod-shaped virions about 21 nm in diameter with a central canal enclosing the viral genomic RNA.</text>
</comment>
<comment type="subcellular location">
    <subcellularLocation>
        <location evidence="1">Virion</location>
    </subcellularLocation>
</comment>
<comment type="similarity">
    <text evidence="1">Belongs to the virgaviridae capsid protein family.</text>
</comment>
<accession>Q9IW99</accession>
<evidence type="ECO:0000305" key="1"/>
<reference key="1">
    <citation type="journal article" date="2001" name="Arch. Virol.">
        <title>The readthrough region of Potato mop-top virus (PMTV) coat protein encoding RNA, the second largest RNA of PMTV genome, undergoes structural changes in naturally infected and experimentally inoculated plants.</title>
        <authorList>
            <person name="Sandgren M."/>
            <person name="Savenkov E.I."/>
            <person name="Valkonen J.P."/>
        </authorList>
    </citation>
    <scope>NUCLEOTIDE SEQUENCE [GENOMIC RNA]</scope>
</reference>
<protein>
    <recommendedName>
        <fullName>Capsid protein</fullName>
    </recommendedName>
    <alternativeName>
        <fullName>Coat protein</fullName>
    </alternativeName>
</protein>
<feature type="chain" id="PRO_0000412280" description="Capsid protein">
    <location>
        <begin position="1"/>
        <end position="176"/>
    </location>
</feature>
<name>CAPSD_PMTVS</name>
<gene>
    <name type="primary">CP</name>
</gene>